<gene>
    <name type="primary">IR6</name>
</gene>
<protein>
    <recommendedName>
        <fullName>Uncharacterized gene 67 protein</fullName>
    </recommendedName>
    <alternativeName>
        <fullName>IR6 protein</fullName>
    </alternativeName>
</protein>
<dbReference type="EMBL" id="M80429">
    <property type="protein sequence ID" value="AAA46076.1"/>
    <property type="molecule type" value="Genomic_DNA"/>
</dbReference>
<dbReference type="PIR" id="D36802">
    <property type="entry name" value="D36802"/>
</dbReference>
<dbReference type="KEGG" id="vg:2948567"/>
<dbReference type="KEGG" id="vg:2948584"/>
<dbReference type="InterPro" id="IPR010447">
    <property type="entry name" value="Herpes_IR6"/>
</dbReference>
<dbReference type="Pfam" id="PF06307">
    <property type="entry name" value="Herpes_IR6"/>
    <property type="match status" value="1"/>
</dbReference>
<proteinExistence type="predicted"/>
<reference key="1">
    <citation type="journal article" date="1992" name="Virology">
        <title>Identification and transcriptional mapping of genes encoded at the IR/Us junction of equine herpesvirus type 1.</title>
        <authorList>
            <person name="Breeden C.A."/>
            <person name="Yalamanchili R.R."/>
            <person name="Colle C.F. III"/>
            <person name="O'Callaghan D.J."/>
        </authorList>
    </citation>
    <scope>NUCLEOTIDE SEQUENCE [GENOMIC DNA]</scope>
</reference>
<organismHost>
    <name type="scientific">Equus caballus</name>
    <name type="common">Horse</name>
    <dbReference type="NCBI Taxonomy" id="9796"/>
</organismHost>
<sequence>MNSDMMTAATAGTEVFRCALARRRNANPPHLVLAPTFAAAAAGGAANSSGEEAPRGERKHLFNPFGCMLGRSYFRRCREEMNEGYFAKVPTGYFPVAPSEVPCRVPVEGVVAGEVLSYSALPLPKIEKRFYKQLNDGTFVRLPFLYPEVYYEGEEEPADERYYIRADAADASSADPSTLPEEAFAKVPPAIAEGITNWQGPKRIPIPSERYVMKLGFEYQLHVTEDAFQEVNTSFMRLDLQSSPDPHPRGARQPRSRAHVSAENPEDTPVAV</sequence>
<evidence type="ECO:0000256" key="1">
    <source>
        <dbReference type="SAM" id="MobiDB-lite"/>
    </source>
</evidence>
<organism>
    <name type="scientific">Equine herpesvirus 1 (strain Kentucky A)</name>
    <name type="common">EHV-1</name>
    <name type="synonym">Equine abortion virus</name>
    <dbReference type="NCBI Taxonomy" id="10329"/>
    <lineage>
        <taxon>Viruses</taxon>
        <taxon>Duplodnaviria</taxon>
        <taxon>Heunggongvirae</taxon>
        <taxon>Peploviricota</taxon>
        <taxon>Herviviricetes</taxon>
        <taxon>Herpesvirales</taxon>
        <taxon>Orthoherpesviridae</taxon>
        <taxon>Alphaherpesvirinae</taxon>
        <taxon>Varicellovirus</taxon>
        <taxon>Varicellovirus equidalpha1</taxon>
        <taxon>Equid alphaherpesvirus 1</taxon>
    </lineage>
</organism>
<accession>P68342</accession>
<accession>P28984</accession>
<feature type="chain" id="PRO_0000116171" description="Uncharacterized gene 67 protein">
    <location>
        <begin position="1"/>
        <end position="272"/>
    </location>
</feature>
<feature type="region of interest" description="Disordered" evidence="1">
    <location>
        <begin position="238"/>
        <end position="272"/>
    </location>
</feature>
<feature type="compositionally biased region" description="Basic residues" evidence="1">
    <location>
        <begin position="249"/>
        <end position="258"/>
    </location>
</feature>
<name>VG67_EHV1K</name>